<comment type="function">
    <text evidence="1">Catalyzes the attachment of proline to tRNA(Pro) in a two-step reaction: proline is first activated by ATP to form Pro-AMP and then transferred to the acceptor end of tRNA(Pro).</text>
</comment>
<comment type="catalytic activity">
    <reaction evidence="1">
        <text>tRNA(Pro) + L-proline + ATP = L-prolyl-tRNA(Pro) + AMP + diphosphate</text>
        <dbReference type="Rhea" id="RHEA:14305"/>
        <dbReference type="Rhea" id="RHEA-COMP:9700"/>
        <dbReference type="Rhea" id="RHEA-COMP:9702"/>
        <dbReference type="ChEBI" id="CHEBI:30616"/>
        <dbReference type="ChEBI" id="CHEBI:33019"/>
        <dbReference type="ChEBI" id="CHEBI:60039"/>
        <dbReference type="ChEBI" id="CHEBI:78442"/>
        <dbReference type="ChEBI" id="CHEBI:78532"/>
        <dbReference type="ChEBI" id="CHEBI:456215"/>
        <dbReference type="EC" id="6.1.1.15"/>
    </reaction>
</comment>
<comment type="subunit">
    <text evidence="1">Homodimer.</text>
</comment>
<comment type="subcellular location">
    <subcellularLocation>
        <location evidence="1">Cytoplasm</location>
    </subcellularLocation>
</comment>
<comment type="similarity">
    <text evidence="1">Belongs to the class-II aminoacyl-tRNA synthetase family. ProS type 2 subfamily.</text>
</comment>
<gene>
    <name evidence="1" type="primary">proS</name>
    <name type="ordered locus">APH_0647</name>
</gene>
<reference key="1">
    <citation type="journal article" date="2006" name="PLoS Genet.">
        <title>Comparative genomics of emerging human ehrlichiosis agents.</title>
        <authorList>
            <person name="Dunning Hotopp J.C."/>
            <person name="Lin M."/>
            <person name="Madupu R."/>
            <person name="Crabtree J."/>
            <person name="Angiuoli S.V."/>
            <person name="Eisen J.A."/>
            <person name="Seshadri R."/>
            <person name="Ren Q."/>
            <person name="Wu M."/>
            <person name="Utterback T.R."/>
            <person name="Smith S."/>
            <person name="Lewis M."/>
            <person name="Khouri H."/>
            <person name="Zhang C."/>
            <person name="Niu H."/>
            <person name="Lin Q."/>
            <person name="Ohashi N."/>
            <person name="Zhi N."/>
            <person name="Nelson W.C."/>
            <person name="Brinkac L.M."/>
            <person name="Dodson R.J."/>
            <person name="Rosovitz M.J."/>
            <person name="Sundaram J.P."/>
            <person name="Daugherty S.C."/>
            <person name="Davidsen T."/>
            <person name="Durkin A.S."/>
            <person name="Gwinn M.L."/>
            <person name="Haft D.H."/>
            <person name="Selengut J.D."/>
            <person name="Sullivan S.A."/>
            <person name="Zafar N."/>
            <person name="Zhou L."/>
            <person name="Benahmed F."/>
            <person name="Forberger H."/>
            <person name="Halpin R."/>
            <person name="Mulligan S."/>
            <person name="Robinson J."/>
            <person name="White O."/>
            <person name="Rikihisa Y."/>
            <person name="Tettelin H."/>
        </authorList>
    </citation>
    <scope>NUCLEOTIDE SEQUENCE [LARGE SCALE GENOMIC DNA]</scope>
    <source>
        <strain>HZ</strain>
    </source>
</reference>
<dbReference type="EC" id="6.1.1.15" evidence="1"/>
<dbReference type="EMBL" id="CP000235">
    <property type="protein sequence ID" value="ABD43602.1"/>
    <property type="molecule type" value="Genomic_DNA"/>
</dbReference>
<dbReference type="RefSeq" id="WP_011450752.1">
    <property type="nucleotide sequence ID" value="NC_007797.1"/>
</dbReference>
<dbReference type="SMR" id="Q2GK70"/>
<dbReference type="STRING" id="212042.APH_0647"/>
<dbReference type="PaxDb" id="212042-APH_0647"/>
<dbReference type="EnsemblBacteria" id="ABD43602">
    <property type="protein sequence ID" value="ABD43602"/>
    <property type="gene ID" value="APH_0647"/>
</dbReference>
<dbReference type="KEGG" id="aph:APH_0647"/>
<dbReference type="PATRIC" id="fig|212042.8.peg.698"/>
<dbReference type="eggNOG" id="COG0442">
    <property type="taxonomic scope" value="Bacteria"/>
</dbReference>
<dbReference type="HOGENOM" id="CLU_016739_4_2_5"/>
<dbReference type="Proteomes" id="UP000001943">
    <property type="component" value="Chromosome"/>
</dbReference>
<dbReference type="GO" id="GO:0005829">
    <property type="term" value="C:cytosol"/>
    <property type="evidence" value="ECO:0007669"/>
    <property type="project" value="TreeGrafter"/>
</dbReference>
<dbReference type="GO" id="GO:0005524">
    <property type="term" value="F:ATP binding"/>
    <property type="evidence" value="ECO:0007669"/>
    <property type="project" value="UniProtKB-UniRule"/>
</dbReference>
<dbReference type="GO" id="GO:0004827">
    <property type="term" value="F:proline-tRNA ligase activity"/>
    <property type="evidence" value="ECO:0007669"/>
    <property type="project" value="UniProtKB-UniRule"/>
</dbReference>
<dbReference type="GO" id="GO:0006433">
    <property type="term" value="P:prolyl-tRNA aminoacylation"/>
    <property type="evidence" value="ECO:0007669"/>
    <property type="project" value="UniProtKB-UniRule"/>
</dbReference>
<dbReference type="CDD" id="cd00861">
    <property type="entry name" value="ProRS_anticodon_short"/>
    <property type="match status" value="1"/>
</dbReference>
<dbReference type="CDD" id="cd00779">
    <property type="entry name" value="ProRS_core_prok"/>
    <property type="match status" value="1"/>
</dbReference>
<dbReference type="FunFam" id="3.30.930.10:FF:000042">
    <property type="entry name" value="probable proline--tRNA ligase, mitochondrial"/>
    <property type="match status" value="1"/>
</dbReference>
<dbReference type="Gene3D" id="3.40.50.800">
    <property type="entry name" value="Anticodon-binding domain"/>
    <property type="match status" value="1"/>
</dbReference>
<dbReference type="Gene3D" id="3.30.930.10">
    <property type="entry name" value="Bira Bifunctional Protein, Domain 2"/>
    <property type="match status" value="1"/>
</dbReference>
<dbReference type="HAMAP" id="MF_01570">
    <property type="entry name" value="Pro_tRNA_synth_type2"/>
    <property type="match status" value="1"/>
</dbReference>
<dbReference type="InterPro" id="IPR002314">
    <property type="entry name" value="aa-tRNA-synt_IIb"/>
</dbReference>
<dbReference type="InterPro" id="IPR006195">
    <property type="entry name" value="aa-tRNA-synth_II"/>
</dbReference>
<dbReference type="InterPro" id="IPR045864">
    <property type="entry name" value="aa-tRNA-synth_II/BPL/LPL"/>
</dbReference>
<dbReference type="InterPro" id="IPR004154">
    <property type="entry name" value="Anticodon-bd"/>
</dbReference>
<dbReference type="InterPro" id="IPR036621">
    <property type="entry name" value="Anticodon-bd_dom_sf"/>
</dbReference>
<dbReference type="InterPro" id="IPR002316">
    <property type="entry name" value="Pro-tRNA-ligase_IIa"/>
</dbReference>
<dbReference type="InterPro" id="IPR004500">
    <property type="entry name" value="Pro-tRNA-synth_IIa_bac-type"/>
</dbReference>
<dbReference type="InterPro" id="IPR050062">
    <property type="entry name" value="Pro-tRNA_synthetase"/>
</dbReference>
<dbReference type="InterPro" id="IPR023716">
    <property type="entry name" value="Prolyl-tRNA_ligase_IIa_type2"/>
</dbReference>
<dbReference type="InterPro" id="IPR044140">
    <property type="entry name" value="ProRS_anticodon_short"/>
</dbReference>
<dbReference type="InterPro" id="IPR033730">
    <property type="entry name" value="ProRS_core_prok"/>
</dbReference>
<dbReference type="NCBIfam" id="NF008979">
    <property type="entry name" value="PRK12325.1"/>
    <property type="match status" value="1"/>
</dbReference>
<dbReference type="NCBIfam" id="TIGR00409">
    <property type="entry name" value="proS_fam_II"/>
    <property type="match status" value="1"/>
</dbReference>
<dbReference type="PANTHER" id="PTHR42753">
    <property type="entry name" value="MITOCHONDRIAL RIBOSOME PROTEIN L39/PROLYL-TRNA LIGASE FAMILY MEMBER"/>
    <property type="match status" value="1"/>
</dbReference>
<dbReference type="PANTHER" id="PTHR42753:SF2">
    <property type="entry name" value="PROLINE--TRNA LIGASE"/>
    <property type="match status" value="1"/>
</dbReference>
<dbReference type="Pfam" id="PF03129">
    <property type="entry name" value="HGTP_anticodon"/>
    <property type="match status" value="1"/>
</dbReference>
<dbReference type="Pfam" id="PF00587">
    <property type="entry name" value="tRNA-synt_2b"/>
    <property type="match status" value="1"/>
</dbReference>
<dbReference type="PRINTS" id="PR01046">
    <property type="entry name" value="TRNASYNTHPRO"/>
</dbReference>
<dbReference type="SUPFAM" id="SSF52954">
    <property type="entry name" value="Class II aaRS ABD-related"/>
    <property type="match status" value="1"/>
</dbReference>
<dbReference type="SUPFAM" id="SSF55681">
    <property type="entry name" value="Class II aaRS and biotin synthetases"/>
    <property type="match status" value="1"/>
</dbReference>
<dbReference type="PROSITE" id="PS50862">
    <property type="entry name" value="AA_TRNA_LIGASE_II"/>
    <property type="match status" value="1"/>
</dbReference>
<proteinExistence type="inferred from homology"/>
<protein>
    <recommendedName>
        <fullName evidence="1">Proline--tRNA ligase</fullName>
        <ecNumber evidence="1">6.1.1.15</ecNumber>
    </recommendedName>
    <alternativeName>
        <fullName evidence="1">Prolyl-tRNA synthetase</fullName>
        <shortName evidence="1">ProRS</shortName>
    </alternativeName>
</protein>
<keyword id="KW-0030">Aminoacyl-tRNA synthetase</keyword>
<keyword id="KW-0067">ATP-binding</keyword>
<keyword id="KW-0963">Cytoplasm</keyword>
<keyword id="KW-0436">Ligase</keyword>
<keyword id="KW-0547">Nucleotide-binding</keyword>
<keyword id="KW-0648">Protein biosynthesis</keyword>
<sequence>MRLSEFYSPTVKNVSSDVVSASHKYSIRAGIVSQTASGIYTLLPLGLMVLRKVENIIREEINAVGFSEILMPTMQPADLWKESQRYDSYGQELIRIHDRGGREMVLGPTHEEVVTDLVRSSLKSYRDLPVNLYQIQWKFRDELRPRNGILRSREFLMMDAYSFDTDFEKAMKTYDAVFRAYRKAFKRMNLQTIALKADMGAIGGSVSHEFHVLTPTGESTVYYDERALELSEMNDYGIEELKEVYAATDDMHDEKSCGIAPEDLKTARGIEVGHIFYLDDRYSRTMNVKFCNTDGHSGTHVKMGCYGIGISRLIGALIEVFHDDAGIKWPLSVAPFKVGIVNLFSKNEECKRVSERIHSVLPNDSLYDDRDDTPGVKLSRMDLIGLPWQVIVGNSFIKDGVLELKNRATGDIELLSVDDVVSRISV</sequence>
<accession>Q2GK70</accession>
<organism>
    <name type="scientific">Anaplasma phagocytophilum (strain HZ)</name>
    <dbReference type="NCBI Taxonomy" id="212042"/>
    <lineage>
        <taxon>Bacteria</taxon>
        <taxon>Pseudomonadati</taxon>
        <taxon>Pseudomonadota</taxon>
        <taxon>Alphaproteobacteria</taxon>
        <taxon>Rickettsiales</taxon>
        <taxon>Anaplasmataceae</taxon>
        <taxon>Anaplasma</taxon>
        <taxon>phagocytophilum group</taxon>
    </lineage>
</organism>
<feature type="chain" id="PRO_0000248888" description="Proline--tRNA ligase">
    <location>
        <begin position="1"/>
        <end position="426"/>
    </location>
</feature>
<name>SYP_ANAPZ</name>
<evidence type="ECO:0000255" key="1">
    <source>
        <dbReference type="HAMAP-Rule" id="MF_01570"/>
    </source>
</evidence>